<comment type="function">
    <text evidence="1 4">Atypical E2F transcription factor that participates in various processes such as angiogenesis and polyploidization of specialized cells. Mainly acts as a transcription repressor that binds DNA independently of DP proteins and specifically recognizes the E2 recognition site 5'-TTTC[CG]CGC-3'. Directly represses transcription of classical E2F transcription factors such as e2f1. Acts as a regulator of S-phase by recognizing and binding the E2-related site 5'-TTCCCGCC-3' and mediating repression of G1/S-regulated genes (By similarity). Acts as a promoter of sprouting angiogenesis, possibly by acting as a transcription activator and promoting expression of vegfa.</text>
</comment>
<comment type="subunit">
    <text evidence="1">Homodimer and heterodimer: mainly forms homodimers and, to a lesser extent, heterodimers with e2f8.</text>
</comment>
<comment type="interaction">
    <interactant intactId="EBI-8030618">
        <id>Q5RIX9</id>
    </interactant>
    <interactant intactId="EBI-447269">
        <id>Q16665</id>
        <label>HIF1A</label>
    </interactant>
    <organismsDiffer>true</organismsDiffer>
    <experiments>2</experiments>
</comment>
<comment type="subcellular location">
    <subcellularLocation>
        <location evidence="1">Nucleus</location>
    </subcellularLocation>
</comment>
<comment type="domain">
    <text evidence="1">In contrast to classical members of the E2F transcription factor, atypical members contain 2 DNA-binding domains and regulate transcription in a DP-independent manner. Both DNA-binding domains are required for DNA-binding and are proposed to form an intramolecular structure that is similar to the winged helix structure of the E2F-DP heterodimer (By similarity).</text>
</comment>
<comment type="disruption phenotype">
    <text evidence="4">Embryos lacking both e2f7 and e2f8 contain multiple intersegmental arteries that completely fail to migrate from the dorsal aorta. Gross morphology of these embryos and initial formation of main axial vessels are unaltered.</text>
</comment>
<comment type="similarity">
    <text evidence="5">Belongs to the E2F/DP family.</text>
</comment>
<sequence>MQEVKCLTLKDLLGVRTLVNKTGSDDAASMNDHKENICMDRRKMTPLKSESLTAALNGHGKISSPEITHITPIKLTEKAHPDPWTPTANLKMLINAASPDIRDREMKKTLFKPIENKGKIAEEEEEEELDDSCQYEALDESERRPSRKQKSLGLLCQKFLALYPDYPESSESINISLDEVATCLGVERRRIYDIVNVLESLMLVSRKAKNMYVWHGRSRLPQTLQGLLQAGRDQHYDLLMDQREGNGLHAVQHVQNAHAASSRRKDKSLRIMSQKFVMLFLVSKTQTVTLDMAAKILIEEGQEESYDSKYKTKVRRLYDIANVLTSLNLIKKIHMREEKTRKPVFKWIGPGNFQSSSNSDDLRGQISNSGTERREKMARHSSFQVITAPPVNQRLISSAPSTPHRYSTDEPVDYSRKSGNNSAVCRLQFGDGVHPSVSPAVPSALASLAMPLQADLMPVPASFSHPLAILPQTPLLMLYSGNISDGASSLRKRERSEEDDHQTTKCRRRSASIESDTVESESLSSSTRRSPVCSPEGSPWDEASFGGLHEDDVAASSSKDALLSPHYLYVPNTAGLNSFNFLLPAGHAQGGVPAVAMPYFVVQSPLIAGAMPTSSTEGAAGFSVPTVLSPAQFVMAGGAYGVTEILQSPEHHGNVPATTSSPRAEESPKPAQTQTPVTPKEASLGSKSFFETPGAFGSLVNQSAARKRGSAQRRLDIGHTAAN</sequence>
<proteinExistence type="evidence at protein level"/>
<protein>
    <recommendedName>
        <fullName>Transcription factor E2F7</fullName>
        <shortName>E2F-7</shortName>
    </recommendedName>
</protein>
<name>E2F7_DANRE</name>
<gene>
    <name type="primary">e2f7</name>
    <name type="ORF">si:dkey-217k21.2</name>
</gene>
<evidence type="ECO:0000250" key="1"/>
<evidence type="ECO:0000255" key="2"/>
<evidence type="ECO:0000256" key="3">
    <source>
        <dbReference type="SAM" id="MobiDB-lite"/>
    </source>
</evidence>
<evidence type="ECO:0000269" key="4">
    <source>
    </source>
</evidence>
<evidence type="ECO:0000305" key="5"/>
<feature type="chain" id="PRO_0000420706" description="Transcription factor E2F7">
    <location>
        <begin position="1"/>
        <end position="723"/>
    </location>
</feature>
<feature type="DNA-binding region" evidence="2">
    <location>
        <begin position="147"/>
        <end position="216"/>
    </location>
</feature>
<feature type="DNA-binding region" evidence="2">
    <location>
        <begin position="264"/>
        <end position="349"/>
    </location>
</feature>
<feature type="region of interest" description="Disordered" evidence="3">
    <location>
        <begin position="121"/>
        <end position="146"/>
    </location>
</feature>
<feature type="region of interest" description="Disordered" evidence="3">
    <location>
        <begin position="356"/>
        <end position="379"/>
    </location>
</feature>
<feature type="region of interest" description="Disordered" evidence="3">
    <location>
        <begin position="395"/>
        <end position="417"/>
    </location>
</feature>
<feature type="region of interest" description="Disordered" evidence="3">
    <location>
        <begin position="489"/>
        <end position="546"/>
    </location>
</feature>
<feature type="region of interest" description="Disordered" evidence="3">
    <location>
        <begin position="650"/>
        <end position="689"/>
    </location>
</feature>
<feature type="region of interest" description="Disordered" evidence="3">
    <location>
        <begin position="702"/>
        <end position="723"/>
    </location>
</feature>
<feature type="compositionally biased region" description="Acidic residues" evidence="3">
    <location>
        <begin position="122"/>
        <end position="139"/>
    </location>
</feature>
<feature type="compositionally biased region" description="Polar residues" evidence="3">
    <location>
        <begin position="356"/>
        <end position="370"/>
    </location>
</feature>
<feature type="compositionally biased region" description="Polar residues" evidence="3">
    <location>
        <begin position="395"/>
        <end position="405"/>
    </location>
</feature>
<feature type="compositionally biased region" description="Basic and acidic residues" evidence="3">
    <location>
        <begin position="494"/>
        <end position="503"/>
    </location>
</feature>
<feature type="compositionally biased region" description="Low complexity" evidence="3">
    <location>
        <begin position="520"/>
        <end position="535"/>
    </location>
</feature>
<dbReference type="EMBL" id="BX072538">
    <property type="protein sequence ID" value="CAI20917.2"/>
    <property type="molecule type" value="Genomic_DNA"/>
</dbReference>
<dbReference type="RefSeq" id="NP_001038612.2">
    <property type="nucleotide sequence ID" value="NM_001045147.2"/>
</dbReference>
<dbReference type="SMR" id="Q5RIX9"/>
<dbReference type="FunCoup" id="Q5RIX9">
    <property type="interactions" value="833"/>
</dbReference>
<dbReference type="IntAct" id="Q5RIX9">
    <property type="interactions" value="1"/>
</dbReference>
<dbReference type="MINT" id="Q5RIX9"/>
<dbReference type="STRING" id="7955.ENSDARP00000117568"/>
<dbReference type="PaxDb" id="7955-ENSDARP00000117568"/>
<dbReference type="Ensembl" id="ENSDART00000140760">
    <property type="protein sequence ID" value="ENSDARP00000117568"/>
    <property type="gene ID" value="ENSDARG00000008986"/>
</dbReference>
<dbReference type="GeneID" id="567941"/>
<dbReference type="KEGG" id="dre:567941"/>
<dbReference type="AGR" id="ZFIN:ZDB-GENE-030131-3527"/>
<dbReference type="CTD" id="144455"/>
<dbReference type="ZFIN" id="ZDB-GENE-030131-3527">
    <property type="gene designation" value="e2f7"/>
</dbReference>
<dbReference type="eggNOG" id="KOG2578">
    <property type="taxonomic scope" value="Eukaryota"/>
</dbReference>
<dbReference type="HOGENOM" id="CLU_014845_1_0_1"/>
<dbReference type="InParanoid" id="Q5RIX9"/>
<dbReference type="OMA" id="EDSCQFE"/>
<dbReference type="OrthoDB" id="5318at2759"/>
<dbReference type="PhylomeDB" id="Q5RIX9"/>
<dbReference type="TreeFam" id="TF105567"/>
<dbReference type="Reactome" id="R-DRE-6804116">
    <property type="pathway name" value="TP53 Regulates Transcription of Genes Involved in G1 Cell Cycle Arrest"/>
</dbReference>
<dbReference type="SignaLink" id="Q5RIX9"/>
<dbReference type="PRO" id="PR:Q5RIX9"/>
<dbReference type="Proteomes" id="UP000000437">
    <property type="component" value="Chromosome 4"/>
</dbReference>
<dbReference type="Bgee" id="ENSDARG00000008986">
    <property type="expression patterns" value="Expressed in testis and 22 other cell types or tissues"/>
</dbReference>
<dbReference type="ExpressionAtlas" id="Q5RIX9">
    <property type="expression patterns" value="baseline"/>
</dbReference>
<dbReference type="GO" id="GO:0090575">
    <property type="term" value="C:RNA polymerase II transcription regulator complex"/>
    <property type="evidence" value="ECO:0000318"/>
    <property type="project" value="GO_Central"/>
</dbReference>
<dbReference type="GO" id="GO:0003677">
    <property type="term" value="F:DNA binding"/>
    <property type="evidence" value="ECO:0000314"/>
    <property type="project" value="ZFIN"/>
</dbReference>
<dbReference type="GO" id="GO:0003700">
    <property type="term" value="F:DNA-binding transcription factor activity"/>
    <property type="evidence" value="ECO:0000315"/>
    <property type="project" value="UniProtKB"/>
</dbReference>
<dbReference type="GO" id="GO:0000981">
    <property type="term" value="F:DNA-binding transcription factor activity, RNA polymerase II-specific"/>
    <property type="evidence" value="ECO:0000318"/>
    <property type="project" value="GO_Central"/>
</dbReference>
<dbReference type="GO" id="GO:0001217">
    <property type="term" value="F:DNA-binding transcription repressor activity"/>
    <property type="evidence" value="ECO:0000250"/>
    <property type="project" value="UniProtKB"/>
</dbReference>
<dbReference type="GO" id="GO:0000978">
    <property type="term" value="F:RNA polymerase II cis-regulatory region sequence-specific DNA binding"/>
    <property type="evidence" value="ECO:0000250"/>
    <property type="project" value="UniProtKB"/>
</dbReference>
<dbReference type="GO" id="GO:0060718">
    <property type="term" value="P:chorionic trophoblast cell differentiation"/>
    <property type="evidence" value="ECO:0000250"/>
    <property type="project" value="UniProtKB"/>
</dbReference>
<dbReference type="GO" id="GO:0030330">
    <property type="term" value="P:DNA damage response, signal transduction by p53 class mediator"/>
    <property type="evidence" value="ECO:0000250"/>
    <property type="project" value="UniProtKB"/>
</dbReference>
<dbReference type="GO" id="GO:0070365">
    <property type="term" value="P:hepatocyte differentiation"/>
    <property type="evidence" value="ECO:0000250"/>
    <property type="project" value="UniProtKB"/>
</dbReference>
<dbReference type="GO" id="GO:0001946">
    <property type="term" value="P:lymphangiogenesis"/>
    <property type="evidence" value="ECO:0000316"/>
    <property type="project" value="ZFIN"/>
</dbReference>
<dbReference type="GO" id="GO:0008045">
    <property type="term" value="P:motor neuron axon guidance"/>
    <property type="evidence" value="ECO:0000316"/>
    <property type="project" value="ZFIN"/>
</dbReference>
<dbReference type="GO" id="GO:0032466">
    <property type="term" value="P:negative regulation of cytokinesis"/>
    <property type="evidence" value="ECO:0000250"/>
    <property type="project" value="UniProtKB"/>
</dbReference>
<dbReference type="GO" id="GO:0045892">
    <property type="term" value="P:negative regulation of DNA-templated transcription"/>
    <property type="evidence" value="ECO:0000316"/>
    <property type="project" value="ZFIN"/>
</dbReference>
<dbReference type="GO" id="GO:2000134">
    <property type="term" value="P:negative regulation of G1/S transition of mitotic cell cycle"/>
    <property type="evidence" value="ECO:0000250"/>
    <property type="project" value="UniProtKB"/>
</dbReference>
<dbReference type="GO" id="GO:0000122">
    <property type="term" value="P:negative regulation of transcription by RNA polymerase II"/>
    <property type="evidence" value="ECO:0000250"/>
    <property type="project" value="UniProtKB"/>
</dbReference>
<dbReference type="GO" id="GO:0032877">
    <property type="term" value="P:positive regulation of DNA endoreduplication"/>
    <property type="evidence" value="ECO:0000250"/>
    <property type="project" value="UniProtKB"/>
</dbReference>
<dbReference type="GO" id="GO:0045944">
    <property type="term" value="P:positive regulation of transcription by RNA polymerase II"/>
    <property type="evidence" value="ECO:0000315"/>
    <property type="project" value="UniProtKB"/>
</dbReference>
<dbReference type="GO" id="GO:0006357">
    <property type="term" value="P:regulation of transcription by RNA polymerase II"/>
    <property type="evidence" value="ECO:0000318"/>
    <property type="project" value="GO_Central"/>
</dbReference>
<dbReference type="GO" id="GO:0002040">
    <property type="term" value="P:sprouting angiogenesis"/>
    <property type="evidence" value="ECO:0000315"/>
    <property type="project" value="UniProtKB"/>
</dbReference>
<dbReference type="FunFam" id="1.10.10.10:FF:000073">
    <property type="entry name" value="E2F transcription factor 8"/>
    <property type="match status" value="1"/>
</dbReference>
<dbReference type="FunFam" id="1.10.10.10:FF:000100">
    <property type="entry name" value="E2F transcription factor 8"/>
    <property type="match status" value="1"/>
</dbReference>
<dbReference type="Gene3D" id="1.10.10.10">
    <property type="entry name" value="Winged helix-like DNA-binding domain superfamily/Winged helix DNA-binding domain"/>
    <property type="match status" value="2"/>
</dbReference>
<dbReference type="InterPro" id="IPR015633">
    <property type="entry name" value="E2F"/>
</dbReference>
<dbReference type="InterPro" id="IPR003316">
    <property type="entry name" value="E2F_WHTH_DNA-bd_dom"/>
</dbReference>
<dbReference type="InterPro" id="IPR036388">
    <property type="entry name" value="WH-like_DNA-bd_sf"/>
</dbReference>
<dbReference type="InterPro" id="IPR036390">
    <property type="entry name" value="WH_DNA-bd_sf"/>
</dbReference>
<dbReference type="PANTHER" id="PTHR12081">
    <property type="entry name" value="TRANSCRIPTION FACTOR E2F"/>
    <property type="match status" value="1"/>
</dbReference>
<dbReference type="PANTHER" id="PTHR12081:SF25">
    <property type="entry name" value="TRANSCRIPTION FACTOR E2F7"/>
    <property type="match status" value="1"/>
</dbReference>
<dbReference type="Pfam" id="PF02319">
    <property type="entry name" value="E2F_TDP"/>
    <property type="match status" value="2"/>
</dbReference>
<dbReference type="SMART" id="SM01372">
    <property type="entry name" value="E2F_TDP"/>
    <property type="match status" value="2"/>
</dbReference>
<dbReference type="SUPFAM" id="SSF46785">
    <property type="entry name" value="Winged helix' DNA-binding domain"/>
    <property type="match status" value="2"/>
</dbReference>
<accession>Q5RIX9</accession>
<organism>
    <name type="scientific">Danio rerio</name>
    <name type="common">Zebrafish</name>
    <name type="synonym">Brachydanio rerio</name>
    <dbReference type="NCBI Taxonomy" id="7955"/>
    <lineage>
        <taxon>Eukaryota</taxon>
        <taxon>Metazoa</taxon>
        <taxon>Chordata</taxon>
        <taxon>Craniata</taxon>
        <taxon>Vertebrata</taxon>
        <taxon>Euteleostomi</taxon>
        <taxon>Actinopterygii</taxon>
        <taxon>Neopterygii</taxon>
        <taxon>Teleostei</taxon>
        <taxon>Ostariophysi</taxon>
        <taxon>Cypriniformes</taxon>
        <taxon>Danionidae</taxon>
        <taxon>Danioninae</taxon>
        <taxon>Danio</taxon>
    </lineage>
</organism>
<reference key="1">
    <citation type="journal article" date="2013" name="Nature">
        <title>The zebrafish reference genome sequence and its relationship to the human genome.</title>
        <authorList>
            <person name="Howe K."/>
            <person name="Clark M.D."/>
            <person name="Torroja C.F."/>
            <person name="Torrance J."/>
            <person name="Berthelot C."/>
            <person name="Muffato M."/>
            <person name="Collins J.E."/>
            <person name="Humphray S."/>
            <person name="McLaren K."/>
            <person name="Matthews L."/>
            <person name="McLaren S."/>
            <person name="Sealy I."/>
            <person name="Caccamo M."/>
            <person name="Churcher C."/>
            <person name="Scott C."/>
            <person name="Barrett J.C."/>
            <person name="Koch R."/>
            <person name="Rauch G.J."/>
            <person name="White S."/>
            <person name="Chow W."/>
            <person name="Kilian B."/>
            <person name="Quintais L.T."/>
            <person name="Guerra-Assuncao J.A."/>
            <person name="Zhou Y."/>
            <person name="Gu Y."/>
            <person name="Yen J."/>
            <person name="Vogel J.H."/>
            <person name="Eyre T."/>
            <person name="Redmond S."/>
            <person name="Banerjee R."/>
            <person name="Chi J."/>
            <person name="Fu B."/>
            <person name="Langley E."/>
            <person name="Maguire S.F."/>
            <person name="Laird G.K."/>
            <person name="Lloyd D."/>
            <person name="Kenyon E."/>
            <person name="Donaldson S."/>
            <person name="Sehra H."/>
            <person name="Almeida-King J."/>
            <person name="Loveland J."/>
            <person name="Trevanion S."/>
            <person name="Jones M."/>
            <person name="Quail M."/>
            <person name="Willey D."/>
            <person name="Hunt A."/>
            <person name="Burton J."/>
            <person name="Sims S."/>
            <person name="McLay K."/>
            <person name="Plumb B."/>
            <person name="Davis J."/>
            <person name="Clee C."/>
            <person name="Oliver K."/>
            <person name="Clark R."/>
            <person name="Riddle C."/>
            <person name="Elliot D."/>
            <person name="Threadgold G."/>
            <person name="Harden G."/>
            <person name="Ware D."/>
            <person name="Begum S."/>
            <person name="Mortimore B."/>
            <person name="Kerry G."/>
            <person name="Heath P."/>
            <person name="Phillimore B."/>
            <person name="Tracey A."/>
            <person name="Corby N."/>
            <person name="Dunn M."/>
            <person name="Johnson C."/>
            <person name="Wood J."/>
            <person name="Clark S."/>
            <person name="Pelan S."/>
            <person name="Griffiths G."/>
            <person name="Smith M."/>
            <person name="Glithero R."/>
            <person name="Howden P."/>
            <person name="Barker N."/>
            <person name="Lloyd C."/>
            <person name="Stevens C."/>
            <person name="Harley J."/>
            <person name="Holt K."/>
            <person name="Panagiotidis G."/>
            <person name="Lovell J."/>
            <person name="Beasley H."/>
            <person name="Henderson C."/>
            <person name="Gordon D."/>
            <person name="Auger K."/>
            <person name="Wright D."/>
            <person name="Collins J."/>
            <person name="Raisen C."/>
            <person name="Dyer L."/>
            <person name="Leung K."/>
            <person name="Robertson L."/>
            <person name="Ambridge K."/>
            <person name="Leongamornlert D."/>
            <person name="McGuire S."/>
            <person name="Gilderthorp R."/>
            <person name="Griffiths C."/>
            <person name="Manthravadi D."/>
            <person name="Nichol S."/>
            <person name="Barker G."/>
            <person name="Whitehead S."/>
            <person name="Kay M."/>
            <person name="Brown J."/>
            <person name="Murnane C."/>
            <person name="Gray E."/>
            <person name="Humphries M."/>
            <person name="Sycamore N."/>
            <person name="Barker D."/>
            <person name="Saunders D."/>
            <person name="Wallis J."/>
            <person name="Babbage A."/>
            <person name="Hammond S."/>
            <person name="Mashreghi-Mohammadi M."/>
            <person name="Barr L."/>
            <person name="Martin S."/>
            <person name="Wray P."/>
            <person name="Ellington A."/>
            <person name="Matthews N."/>
            <person name="Ellwood M."/>
            <person name="Woodmansey R."/>
            <person name="Clark G."/>
            <person name="Cooper J."/>
            <person name="Tromans A."/>
            <person name="Grafham D."/>
            <person name="Skuce C."/>
            <person name="Pandian R."/>
            <person name="Andrews R."/>
            <person name="Harrison E."/>
            <person name="Kimberley A."/>
            <person name="Garnett J."/>
            <person name="Fosker N."/>
            <person name="Hall R."/>
            <person name="Garner P."/>
            <person name="Kelly D."/>
            <person name="Bird C."/>
            <person name="Palmer S."/>
            <person name="Gehring I."/>
            <person name="Berger A."/>
            <person name="Dooley C.M."/>
            <person name="Ersan-Urun Z."/>
            <person name="Eser C."/>
            <person name="Geiger H."/>
            <person name="Geisler M."/>
            <person name="Karotki L."/>
            <person name="Kirn A."/>
            <person name="Konantz J."/>
            <person name="Konantz M."/>
            <person name="Oberlander M."/>
            <person name="Rudolph-Geiger S."/>
            <person name="Teucke M."/>
            <person name="Lanz C."/>
            <person name="Raddatz G."/>
            <person name="Osoegawa K."/>
            <person name="Zhu B."/>
            <person name="Rapp A."/>
            <person name="Widaa S."/>
            <person name="Langford C."/>
            <person name="Yang F."/>
            <person name="Schuster S.C."/>
            <person name="Carter N.P."/>
            <person name="Harrow J."/>
            <person name="Ning Z."/>
            <person name="Herrero J."/>
            <person name="Searle S.M."/>
            <person name="Enright A."/>
            <person name="Geisler R."/>
            <person name="Plasterk R.H."/>
            <person name="Lee C."/>
            <person name="Westerfield M."/>
            <person name="de Jong P.J."/>
            <person name="Zon L.I."/>
            <person name="Postlethwait J.H."/>
            <person name="Nusslein-Volhard C."/>
            <person name="Hubbard T.J."/>
            <person name="Roest Crollius H."/>
            <person name="Rogers J."/>
            <person name="Stemple D.L."/>
        </authorList>
    </citation>
    <scope>NUCLEOTIDE SEQUENCE [LARGE SCALE GENOMIC DNA]</scope>
    <source>
        <strain>Tuebingen</strain>
    </source>
</reference>
<reference key="2">
    <citation type="journal article" date="2012" name="EMBO J.">
        <title>E2F7 and E2F8 promote angiogenesis through transcriptional activation of VEGFA in cooperation with HIF1.</title>
        <authorList>
            <person name="Weijts B.G."/>
            <person name="Bakker W.J."/>
            <person name="Cornelissen P.W."/>
            <person name="Liang K.H."/>
            <person name="Schaftenaar F.H."/>
            <person name="Westendorp B."/>
            <person name="de Wolf C.A."/>
            <person name="Paciejewska M."/>
            <person name="Scheele C.L."/>
            <person name="Kent L."/>
            <person name="Leone G."/>
            <person name="Schulte-Merker S."/>
            <person name="de Bruin A."/>
        </authorList>
    </citation>
    <scope>FUNCTION</scope>
    <scope>DISRUPTION PHENOTYPE</scope>
</reference>
<keyword id="KW-0010">Activator</keyword>
<keyword id="KW-0131">Cell cycle</keyword>
<keyword id="KW-0238">DNA-binding</keyword>
<keyword id="KW-0539">Nucleus</keyword>
<keyword id="KW-1185">Reference proteome</keyword>
<keyword id="KW-0678">Repressor</keyword>
<keyword id="KW-0804">Transcription</keyword>
<keyword id="KW-0805">Transcription regulation</keyword>